<feature type="chain" id="PRO_0000150600" description="Olfactory receptor 5K1">
    <location>
        <begin position="1"/>
        <end position="308"/>
    </location>
</feature>
<feature type="topological domain" description="Extracellular" evidence="1">
    <location>
        <begin position="1"/>
        <end position="25"/>
    </location>
</feature>
<feature type="transmembrane region" description="Helical; Name=1" evidence="1">
    <location>
        <begin position="26"/>
        <end position="46"/>
    </location>
</feature>
<feature type="topological domain" description="Cytoplasmic" evidence="1">
    <location>
        <begin position="47"/>
        <end position="54"/>
    </location>
</feature>
<feature type="transmembrane region" description="Helical; Name=2" evidence="1">
    <location>
        <begin position="55"/>
        <end position="75"/>
    </location>
</feature>
<feature type="topological domain" description="Extracellular" evidence="1">
    <location>
        <begin position="76"/>
        <end position="99"/>
    </location>
</feature>
<feature type="transmembrane region" description="Helical; Name=3" evidence="1">
    <location>
        <begin position="100"/>
        <end position="120"/>
    </location>
</feature>
<feature type="topological domain" description="Cytoplasmic" evidence="1">
    <location>
        <begin position="121"/>
        <end position="139"/>
    </location>
</feature>
<feature type="transmembrane region" description="Helical; Name=4" evidence="1">
    <location>
        <begin position="140"/>
        <end position="160"/>
    </location>
</feature>
<feature type="topological domain" description="Extracellular" evidence="1">
    <location>
        <begin position="161"/>
        <end position="196"/>
    </location>
</feature>
<feature type="transmembrane region" description="Helical; Name=5" evidence="1">
    <location>
        <begin position="197"/>
        <end position="217"/>
    </location>
</feature>
<feature type="topological domain" description="Cytoplasmic" evidence="1">
    <location>
        <begin position="218"/>
        <end position="237"/>
    </location>
</feature>
<feature type="transmembrane region" description="Helical; Name=6" evidence="1">
    <location>
        <begin position="238"/>
        <end position="258"/>
    </location>
</feature>
<feature type="topological domain" description="Extracellular" evidence="1">
    <location>
        <begin position="259"/>
        <end position="271"/>
    </location>
</feature>
<feature type="transmembrane region" description="Helical; Name=7" evidence="1">
    <location>
        <begin position="272"/>
        <end position="292"/>
    </location>
</feature>
<feature type="topological domain" description="Cytoplasmic" evidence="1">
    <location>
        <begin position="293"/>
        <end position="308"/>
    </location>
</feature>
<feature type="glycosylation site" description="N-linked (GlcNAc...) asparagine" evidence="1">
    <location>
        <position position="5"/>
    </location>
</feature>
<feature type="disulfide bond" evidence="2">
    <location>
        <begin position="97"/>
        <end position="189"/>
    </location>
</feature>
<accession>Q8NHB7</accession>
<accession>B9EGY5</accession>
<accession>Q6IF46</accession>
<gene>
    <name type="primary">OR5K1</name>
</gene>
<reference key="1">
    <citation type="submission" date="2001-07" db="EMBL/GenBank/DDBJ databases">
        <title>Genome-wide discovery and analysis of human seven transmembrane helix receptor genes.</title>
        <authorList>
            <person name="Suwa M."/>
            <person name="Sato T."/>
            <person name="Okouchi I."/>
            <person name="Arita M."/>
            <person name="Futami K."/>
            <person name="Matsumoto S."/>
            <person name="Tsutsumi S."/>
            <person name="Aburatani H."/>
            <person name="Asai K."/>
            <person name="Akiyama Y."/>
        </authorList>
    </citation>
    <scope>NUCLEOTIDE SEQUENCE [GENOMIC DNA]</scope>
</reference>
<reference key="2">
    <citation type="journal article" date="2006" name="Nature">
        <title>The DNA sequence, annotation and analysis of human chromosome 3.</title>
        <authorList>
            <person name="Muzny D.M."/>
            <person name="Scherer S.E."/>
            <person name="Kaul R."/>
            <person name="Wang J."/>
            <person name="Yu J."/>
            <person name="Sudbrak R."/>
            <person name="Buhay C.J."/>
            <person name="Chen R."/>
            <person name="Cree A."/>
            <person name="Ding Y."/>
            <person name="Dugan-Rocha S."/>
            <person name="Gill R."/>
            <person name="Gunaratne P."/>
            <person name="Harris R.A."/>
            <person name="Hawes A.C."/>
            <person name="Hernandez J."/>
            <person name="Hodgson A.V."/>
            <person name="Hume J."/>
            <person name="Jackson A."/>
            <person name="Khan Z.M."/>
            <person name="Kovar-Smith C."/>
            <person name="Lewis L.R."/>
            <person name="Lozado R.J."/>
            <person name="Metzker M.L."/>
            <person name="Milosavljevic A."/>
            <person name="Miner G.R."/>
            <person name="Morgan M.B."/>
            <person name="Nazareth L.V."/>
            <person name="Scott G."/>
            <person name="Sodergren E."/>
            <person name="Song X.-Z."/>
            <person name="Steffen D."/>
            <person name="Wei S."/>
            <person name="Wheeler D.A."/>
            <person name="Wright M.W."/>
            <person name="Worley K.C."/>
            <person name="Yuan Y."/>
            <person name="Zhang Z."/>
            <person name="Adams C.Q."/>
            <person name="Ansari-Lari M.A."/>
            <person name="Ayele M."/>
            <person name="Brown M.J."/>
            <person name="Chen G."/>
            <person name="Chen Z."/>
            <person name="Clendenning J."/>
            <person name="Clerc-Blankenburg K.P."/>
            <person name="Chen R."/>
            <person name="Chen Z."/>
            <person name="Davis C."/>
            <person name="Delgado O."/>
            <person name="Dinh H.H."/>
            <person name="Dong W."/>
            <person name="Draper H."/>
            <person name="Ernst S."/>
            <person name="Fu G."/>
            <person name="Gonzalez-Garay M.L."/>
            <person name="Garcia D.K."/>
            <person name="Gillett W."/>
            <person name="Gu J."/>
            <person name="Hao B."/>
            <person name="Haugen E."/>
            <person name="Havlak P."/>
            <person name="He X."/>
            <person name="Hennig S."/>
            <person name="Hu S."/>
            <person name="Huang W."/>
            <person name="Jackson L.R."/>
            <person name="Jacob L.S."/>
            <person name="Kelly S.H."/>
            <person name="Kube M."/>
            <person name="Levy R."/>
            <person name="Li Z."/>
            <person name="Liu B."/>
            <person name="Liu J."/>
            <person name="Liu W."/>
            <person name="Lu J."/>
            <person name="Maheshwari M."/>
            <person name="Nguyen B.-V."/>
            <person name="Okwuonu G.O."/>
            <person name="Palmeiri A."/>
            <person name="Pasternak S."/>
            <person name="Perez L.M."/>
            <person name="Phelps K.A."/>
            <person name="Plopper F.J."/>
            <person name="Qiang B."/>
            <person name="Raymond C."/>
            <person name="Rodriguez R."/>
            <person name="Saenphimmachak C."/>
            <person name="Santibanez J."/>
            <person name="Shen H."/>
            <person name="Shen Y."/>
            <person name="Subramanian S."/>
            <person name="Tabor P.E."/>
            <person name="Verduzco D."/>
            <person name="Waldron L."/>
            <person name="Wang J."/>
            <person name="Wang J."/>
            <person name="Wang Q."/>
            <person name="Williams G.A."/>
            <person name="Wong G.K.-S."/>
            <person name="Yao Z."/>
            <person name="Zhang J."/>
            <person name="Zhang X."/>
            <person name="Zhao G."/>
            <person name="Zhou J."/>
            <person name="Zhou Y."/>
            <person name="Nelson D."/>
            <person name="Lehrach H."/>
            <person name="Reinhardt R."/>
            <person name="Naylor S.L."/>
            <person name="Yang H."/>
            <person name="Olson M."/>
            <person name="Weinstock G."/>
            <person name="Gibbs R.A."/>
        </authorList>
    </citation>
    <scope>NUCLEOTIDE SEQUENCE [LARGE SCALE GENOMIC DNA]</scope>
</reference>
<reference key="3">
    <citation type="submission" date="2005-09" db="EMBL/GenBank/DDBJ databases">
        <authorList>
            <person name="Mural R.J."/>
            <person name="Istrail S."/>
            <person name="Sutton G."/>
            <person name="Florea L."/>
            <person name="Halpern A.L."/>
            <person name="Mobarry C.M."/>
            <person name="Lippert R."/>
            <person name="Walenz B."/>
            <person name="Shatkay H."/>
            <person name="Dew I."/>
            <person name="Miller J.R."/>
            <person name="Flanigan M.J."/>
            <person name="Edwards N.J."/>
            <person name="Bolanos R."/>
            <person name="Fasulo D."/>
            <person name="Halldorsson B.V."/>
            <person name="Hannenhalli S."/>
            <person name="Turner R."/>
            <person name="Yooseph S."/>
            <person name="Lu F."/>
            <person name="Nusskern D.R."/>
            <person name="Shue B.C."/>
            <person name="Zheng X.H."/>
            <person name="Zhong F."/>
            <person name="Delcher A.L."/>
            <person name="Huson D.H."/>
            <person name="Kravitz S.A."/>
            <person name="Mouchard L."/>
            <person name="Reinert K."/>
            <person name="Remington K.A."/>
            <person name="Clark A.G."/>
            <person name="Waterman M.S."/>
            <person name="Eichler E.E."/>
            <person name="Adams M.D."/>
            <person name="Hunkapiller M.W."/>
            <person name="Myers E.W."/>
            <person name="Venter J.C."/>
        </authorList>
    </citation>
    <scope>NUCLEOTIDE SEQUENCE [LARGE SCALE GENOMIC DNA]</scope>
</reference>
<reference key="4">
    <citation type="journal article" date="2004" name="Genome Res.">
        <title>The status, quality, and expansion of the NIH full-length cDNA project: the Mammalian Gene Collection (MGC).</title>
        <authorList>
            <consortium name="The MGC Project Team"/>
        </authorList>
    </citation>
    <scope>NUCLEOTIDE SEQUENCE [LARGE SCALE MRNA]</scope>
    <source>
        <tissue>Testis</tissue>
    </source>
</reference>
<reference key="5">
    <citation type="journal article" date="1992" name="Nature">
        <title>Expression of members of the putative olfactory receptor gene family in mammalian germ cells.</title>
        <authorList>
            <person name="Parmentier M."/>
            <person name="Libert F."/>
            <person name="Schurmans S."/>
            <person name="Schiffmann S."/>
            <person name="Lefort A."/>
            <person name="Eggerickx D."/>
            <person name="Ledent C."/>
            <person name="Mollereau C."/>
            <person name="Gerard C."/>
            <person name="Perret J."/>
            <person name="Grootegoed A."/>
            <person name="Vassart G."/>
        </authorList>
    </citation>
    <scope>NUCLEOTIDE SEQUENCE [MRNA] OF 126-237</scope>
    <source>
        <tissue>Testis</tissue>
    </source>
</reference>
<reference key="6">
    <citation type="journal article" date="2004" name="Proc. Natl. Acad. Sci. U.S.A.">
        <title>The human olfactory receptor gene family.</title>
        <authorList>
            <person name="Malnic B."/>
            <person name="Godfrey P.A."/>
            <person name="Buck L.B."/>
        </authorList>
    </citation>
    <scope>IDENTIFICATION</scope>
</reference>
<reference key="7">
    <citation type="journal article" date="2004" name="Proc. Natl. Acad. Sci. U.S.A.">
        <authorList>
            <person name="Malnic B."/>
            <person name="Godfrey P.A."/>
            <person name="Buck L.B."/>
        </authorList>
    </citation>
    <scope>ERRATUM OF PUBMED:14983052</scope>
</reference>
<protein>
    <recommendedName>
        <fullName>Olfactory receptor 5K1</fullName>
    </recommendedName>
    <alternativeName>
        <fullName>HTPCRX10</fullName>
    </alternativeName>
    <alternativeName>
        <fullName>Olfactory receptor OR3-8</fullName>
    </alternativeName>
</protein>
<proteinExistence type="evidence at transcript level"/>
<organism>
    <name type="scientific">Homo sapiens</name>
    <name type="common">Human</name>
    <dbReference type="NCBI Taxonomy" id="9606"/>
    <lineage>
        <taxon>Eukaryota</taxon>
        <taxon>Metazoa</taxon>
        <taxon>Chordata</taxon>
        <taxon>Craniata</taxon>
        <taxon>Vertebrata</taxon>
        <taxon>Euteleostomi</taxon>
        <taxon>Mammalia</taxon>
        <taxon>Eutheria</taxon>
        <taxon>Euarchontoglires</taxon>
        <taxon>Primates</taxon>
        <taxon>Haplorrhini</taxon>
        <taxon>Catarrhini</taxon>
        <taxon>Hominidae</taxon>
        <taxon>Homo</taxon>
    </lineage>
</organism>
<keyword id="KW-1003">Cell membrane</keyword>
<keyword id="KW-1015">Disulfide bond</keyword>
<keyword id="KW-0297">G-protein coupled receptor</keyword>
<keyword id="KW-0325">Glycoprotein</keyword>
<keyword id="KW-0472">Membrane</keyword>
<keyword id="KW-0552">Olfaction</keyword>
<keyword id="KW-0675">Receptor</keyword>
<keyword id="KW-1185">Reference proteome</keyword>
<keyword id="KW-0716">Sensory transduction</keyword>
<keyword id="KW-0807">Transducer</keyword>
<keyword id="KW-0812">Transmembrane</keyword>
<keyword id="KW-1133">Transmembrane helix</keyword>
<sequence length="308" mass="35185">MAEENHTMKNEFILTGFTDHPELKTLLFVVFFAIYLITVVGNISLVALIFTHRRLHTPMYIFLGNLALVDSCCACAITPKMLENFFSENKRISLYECAVQFYFLCTVETADCFLLAAMAYDRYVAICNPLQYHIMMSKKLCIQMTTGAFIAGNLHSMIHVGLVFRLVFCGSNHINHFYCDILPLYRLSCVDPYINELVLFIFSGSVQVFTIGSVLISYLYILLTIFKMKSKEGRAKAFSTCASHFLSVSLFYGSLFFMYVRPNLLEEGDKDIPAAILFTIVVPLLNPFIYSLRNREVISVLRKILMKK</sequence>
<name>OR5K1_HUMAN</name>
<dbReference type="EMBL" id="AB065458">
    <property type="protein sequence ID" value="BAC05718.1"/>
    <property type="status" value="ALT_FRAME"/>
    <property type="molecule type" value="Genomic_DNA"/>
</dbReference>
<dbReference type="EMBL" id="AC074274">
    <property type="status" value="NOT_ANNOTATED_CDS"/>
    <property type="molecule type" value="Genomic_DNA"/>
</dbReference>
<dbReference type="EMBL" id="CH471052">
    <property type="protein sequence ID" value="EAW79862.1"/>
    <property type="molecule type" value="Genomic_DNA"/>
</dbReference>
<dbReference type="EMBL" id="BC136918">
    <property type="protein sequence ID" value="AAI36919.1"/>
    <property type="molecule type" value="mRNA"/>
</dbReference>
<dbReference type="EMBL" id="BC136919">
    <property type="protein sequence ID" value="AAI36920.1"/>
    <property type="molecule type" value="mRNA"/>
</dbReference>
<dbReference type="EMBL" id="X64984">
    <property type="status" value="NOT_ANNOTATED_CDS"/>
    <property type="molecule type" value="mRNA"/>
</dbReference>
<dbReference type="EMBL" id="BK004416">
    <property type="protein sequence ID" value="DAA04814.1"/>
    <property type="molecule type" value="Genomic_DNA"/>
</dbReference>
<dbReference type="CCDS" id="CCDS43115.1"/>
<dbReference type="RefSeq" id="NP_001004736.2">
    <property type="nucleotide sequence ID" value="NM_001004736.4"/>
</dbReference>
<dbReference type="SMR" id="Q8NHB7"/>
<dbReference type="FunCoup" id="Q8NHB7">
    <property type="interactions" value="456"/>
</dbReference>
<dbReference type="STRING" id="9606.ENSP00000493267"/>
<dbReference type="ChEMBL" id="CHEMBL3721312"/>
<dbReference type="GlyCosmos" id="Q8NHB7">
    <property type="glycosylation" value="1 site, No reported glycans"/>
</dbReference>
<dbReference type="GlyGen" id="Q8NHB7">
    <property type="glycosylation" value="1 site"/>
</dbReference>
<dbReference type="BioMuta" id="OR5K1"/>
<dbReference type="DMDM" id="317373404"/>
<dbReference type="MassIVE" id="Q8NHB7"/>
<dbReference type="PaxDb" id="9606-ENSP00000373193"/>
<dbReference type="PeptideAtlas" id="Q8NHB7"/>
<dbReference type="ProteomicsDB" id="73696"/>
<dbReference type="Antibodypedia" id="62078">
    <property type="antibodies" value="42 antibodies from 14 providers"/>
</dbReference>
<dbReference type="DNASU" id="26339"/>
<dbReference type="Ensembl" id="ENST00000332650.5">
    <property type="protein sequence ID" value="ENSP00000373193.2"/>
    <property type="gene ID" value="ENSG00000232382.2"/>
</dbReference>
<dbReference type="Ensembl" id="ENST00000642057.1">
    <property type="protein sequence ID" value="ENSP00000493267.1"/>
    <property type="gene ID" value="ENSG00000232382.2"/>
</dbReference>
<dbReference type="GeneID" id="26339"/>
<dbReference type="KEGG" id="hsa:26339"/>
<dbReference type="MANE-Select" id="ENST00000642057.1">
    <property type="protein sequence ID" value="ENSP00000493267.1"/>
    <property type="RefSeq nucleotide sequence ID" value="NM_001004736.4"/>
    <property type="RefSeq protein sequence ID" value="NP_001004736.2"/>
</dbReference>
<dbReference type="UCSC" id="uc003dsm.4">
    <property type="organism name" value="human"/>
</dbReference>
<dbReference type="AGR" id="HGNC:8349"/>
<dbReference type="CTD" id="26339"/>
<dbReference type="DisGeNET" id="26339"/>
<dbReference type="GeneCards" id="OR5K1"/>
<dbReference type="HGNC" id="HGNC:8349">
    <property type="gene designation" value="OR5K1"/>
</dbReference>
<dbReference type="HPA" id="ENSG00000232382">
    <property type="expression patterns" value="Not detected"/>
</dbReference>
<dbReference type="neXtProt" id="NX_Q8NHB7"/>
<dbReference type="OpenTargets" id="ENSG00000232382"/>
<dbReference type="PharmGKB" id="PA32542"/>
<dbReference type="VEuPathDB" id="HostDB:ENSG00000232382"/>
<dbReference type="eggNOG" id="ENOG502T6QX">
    <property type="taxonomic scope" value="Eukaryota"/>
</dbReference>
<dbReference type="GeneTree" id="ENSGT01120000271834"/>
<dbReference type="HOGENOM" id="CLU_012526_8_1_1"/>
<dbReference type="InParanoid" id="Q8NHB7"/>
<dbReference type="OMA" id="KENHTIK"/>
<dbReference type="OrthoDB" id="9975554at2759"/>
<dbReference type="PAN-GO" id="Q8NHB7">
    <property type="GO annotations" value="2 GO annotations based on evolutionary models"/>
</dbReference>
<dbReference type="PhylomeDB" id="Q8NHB7"/>
<dbReference type="TreeFam" id="TF352737"/>
<dbReference type="PathwayCommons" id="Q8NHB7"/>
<dbReference type="Reactome" id="R-HSA-381753">
    <property type="pathway name" value="Olfactory Signaling Pathway"/>
</dbReference>
<dbReference type="Reactome" id="R-HSA-9752946">
    <property type="pathway name" value="Expression and translocation of olfactory receptors"/>
</dbReference>
<dbReference type="BioGRID-ORCS" id="26339">
    <property type="hits" value="17 hits in 639 CRISPR screens"/>
</dbReference>
<dbReference type="GeneWiki" id="OR5K1"/>
<dbReference type="GenomeRNAi" id="26339"/>
<dbReference type="Pharos" id="Q8NHB7">
    <property type="development level" value="Tdark"/>
</dbReference>
<dbReference type="PRO" id="PR:Q8NHB7"/>
<dbReference type="Proteomes" id="UP000005640">
    <property type="component" value="Chromosome 3"/>
</dbReference>
<dbReference type="RNAct" id="Q8NHB7">
    <property type="molecule type" value="protein"/>
</dbReference>
<dbReference type="Bgee" id="ENSG00000232382">
    <property type="expression patterns" value="Expressed in calcaneal tendon and 6 other cell types or tissues"/>
</dbReference>
<dbReference type="ExpressionAtlas" id="Q8NHB7">
    <property type="expression patterns" value="baseline and differential"/>
</dbReference>
<dbReference type="GO" id="GO:0005886">
    <property type="term" value="C:plasma membrane"/>
    <property type="evidence" value="ECO:0000304"/>
    <property type="project" value="Reactome"/>
</dbReference>
<dbReference type="GO" id="GO:0004930">
    <property type="term" value="F:G protein-coupled receptor activity"/>
    <property type="evidence" value="ECO:0007669"/>
    <property type="project" value="UniProtKB-KW"/>
</dbReference>
<dbReference type="GO" id="GO:0005549">
    <property type="term" value="F:odorant binding"/>
    <property type="evidence" value="ECO:0000318"/>
    <property type="project" value="GO_Central"/>
</dbReference>
<dbReference type="GO" id="GO:0004984">
    <property type="term" value="F:olfactory receptor activity"/>
    <property type="evidence" value="ECO:0000318"/>
    <property type="project" value="GO_Central"/>
</dbReference>
<dbReference type="CDD" id="cd15409">
    <property type="entry name" value="7tmA_OR5H-like"/>
    <property type="match status" value="1"/>
</dbReference>
<dbReference type="FunFam" id="1.20.1070.10:FF:000004">
    <property type="entry name" value="Olfactory receptor"/>
    <property type="match status" value="1"/>
</dbReference>
<dbReference type="Gene3D" id="1.20.1070.10">
    <property type="entry name" value="Rhodopsin 7-helix transmembrane proteins"/>
    <property type="match status" value="1"/>
</dbReference>
<dbReference type="InterPro" id="IPR000276">
    <property type="entry name" value="GPCR_Rhodpsn"/>
</dbReference>
<dbReference type="InterPro" id="IPR017452">
    <property type="entry name" value="GPCR_Rhodpsn_7TM"/>
</dbReference>
<dbReference type="InterPro" id="IPR000725">
    <property type="entry name" value="Olfact_rcpt"/>
</dbReference>
<dbReference type="PANTHER" id="PTHR48018">
    <property type="entry name" value="OLFACTORY RECEPTOR"/>
    <property type="match status" value="1"/>
</dbReference>
<dbReference type="Pfam" id="PF13853">
    <property type="entry name" value="7tm_4"/>
    <property type="match status" value="1"/>
</dbReference>
<dbReference type="PRINTS" id="PR00237">
    <property type="entry name" value="GPCRRHODOPSN"/>
</dbReference>
<dbReference type="PRINTS" id="PR00245">
    <property type="entry name" value="OLFACTORYR"/>
</dbReference>
<dbReference type="SUPFAM" id="SSF81321">
    <property type="entry name" value="Family A G protein-coupled receptor-like"/>
    <property type="match status" value="1"/>
</dbReference>
<dbReference type="PROSITE" id="PS00237">
    <property type="entry name" value="G_PROTEIN_RECEP_F1_1"/>
    <property type="match status" value="1"/>
</dbReference>
<dbReference type="PROSITE" id="PS50262">
    <property type="entry name" value="G_PROTEIN_RECEP_F1_2"/>
    <property type="match status" value="1"/>
</dbReference>
<evidence type="ECO:0000255" key="1"/>
<evidence type="ECO:0000255" key="2">
    <source>
        <dbReference type="PROSITE-ProRule" id="PRU00521"/>
    </source>
</evidence>
<evidence type="ECO:0000305" key="3"/>
<comment type="function">
    <text evidence="3">Odorant receptor.</text>
</comment>
<comment type="subcellular location">
    <subcellularLocation>
        <location>Cell membrane</location>
        <topology>Multi-pass membrane protein</topology>
    </subcellularLocation>
</comment>
<comment type="similarity">
    <text evidence="2">Belongs to the G-protein coupled receptor 1 family.</text>
</comment>
<comment type="sequence caution" evidence="3">
    <conflict type="frameshift">
        <sequence resource="EMBL-CDS" id="BAC05718"/>
    </conflict>
</comment>
<comment type="online information" name="Human Olfactory Receptor Data Exploratorium (HORDE)">
    <link uri="http://genome.weizmann.ac.il/horde/card/index/symbol:OR5K1"/>
</comment>